<proteinExistence type="inferred from homology"/>
<reference key="1">
    <citation type="journal article" date="2011" name="J. Bacteriol.">
        <title>Comparative genomics of 28 Salmonella enterica isolates: evidence for CRISPR-mediated adaptive sublineage evolution.</title>
        <authorList>
            <person name="Fricke W.F."/>
            <person name="Mammel M.K."/>
            <person name="McDermott P.F."/>
            <person name="Tartera C."/>
            <person name="White D.G."/>
            <person name="Leclerc J.E."/>
            <person name="Ravel J."/>
            <person name="Cebula T.A."/>
        </authorList>
    </citation>
    <scope>NUCLEOTIDE SEQUENCE [LARGE SCALE GENOMIC DNA]</scope>
    <source>
        <strain>SL254</strain>
    </source>
</reference>
<evidence type="ECO:0000255" key="1">
    <source>
        <dbReference type="HAMAP-Rule" id="MF_00139"/>
    </source>
</evidence>
<evidence type="ECO:0000255" key="2">
    <source>
        <dbReference type="PROSITE-ProRule" id="PRU01202"/>
    </source>
</evidence>
<sequence length="529" mass="57340">MQQRRPVRRALLSVSDKAGIIEFAQALSARGVELLSTGGTARLLAEKGLPVTEVSDYTGFPEMMDGRVKTLHPKVHGGILGRRGQDDAIMEQHHIAPIDMVVVNLYPFAETVAREGCSLEDAVENIDIGGPTMVRSAAKNHKDVAIVVKSSDYDAIIKEMDANEGSLTLDTRFDLAIKAFEHTAAYDSMIANYFGSMVPAYHGESKEAAGRFPRTLNLNFIKKQDMRYGENSHQQAAFYIEENVKEASVATATQVQGKALSYNNIADTDAALECVKEFNEPACVIVKHANPCGVAVSTSILDAYDRAYKTDPTSAFGGIIAFNRELDAETAQAIISRQFVEVIIAPSASGEALKITAAKQNVRVLTCGQWAQRVPGLDFKRVNGGLLVQDRDLGMVSEAELRVVSKRQPTEQELRDALFCWKVAKFVKSNAIVYAKENMTIGIGAGQMSRVYSAKIAGIKAADEGLEVKGSAMASDAFFPFRDGIDAAAAVGVSCVIQPGGSIRDDEVIAAADEHGIAMIFTDMRHFRH</sequence>
<name>PUR9_SALNS</name>
<comment type="catalytic activity">
    <reaction evidence="1">
        <text>(6R)-10-formyltetrahydrofolate + 5-amino-1-(5-phospho-beta-D-ribosyl)imidazole-4-carboxamide = 5-formamido-1-(5-phospho-D-ribosyl)imidazole-4-carboxamide + (6S)-5,6,7,8-tetrahydrofolate</text>
        <dbReference type="Rhea" id="RHEA:22192"/>
        <dbReference type="ChEBI" id="CHEBI:57453"/>
        <dbReference type="ChEBI" id="CHEBI:58467"/>
        <dbReference type="ChEBI" id="CHEBI:58475"/>
        <dbReference type="ChEBI" id="CHEBI:195366"/>
        <dbReference type="EC" id="2.1.2.3"/>
    </reaction>
</comment>
<comment type="catalytic activity">
    <reaction evidence="1">
        <text>IMP + H2O = 5-formamido-1-(5-phospho-D-ribosyl)imidazole-4-carboxamide</text>
        <dbReference type="Rhea" id="RHEA:18445"/>
        <dbReference type="ChEBI" id="CHEBI:15377"/>
        <dbReference type="ChEBI" id="CHEBI:58053"/>
        <dbReference type="ChEBI" id="CHEBI:58467"/>
        <dbReference type="EC" id="3.5.4.10"/>
    </reaction>
</comment>
<comment type="pathway">
    <text evidence="1">Purine metabolism; IMP biosynthesis via de novo pathway; 5-formamido-1-(5-phospho-D-ribosyl)imidazole-4-carboxamide from 5-amino-1-(5-phospho-D-ribosyl)imidazole-4-carboxamide (10-formyl THF route): step 1/1.</text>
</comment>
<comment type="pathway">
    <text evidence="1">Purine metabolism; IMP biosynthesis via de novo pathway; IMP from 5-formamido-1-(5-phospho-D-ribosyl)imidazole-4-carboxamide: step 1/1.</text>
</comment>
<comment type="domain">
    <text evidence="1">The IMP cyclohydrolase activity resides in the N-terminal region.</text>
</comment>
<comment type="similarity">
    <text evidence="1">Belongs to the PurH family.</text>
</comment>
<feature type="chain" id="PRO_1000096093" description="Bifunctional purine biosynthesis protein PurH">
    <location>
        <begin position="1"/>
        <end position="529"/>
    </location>
</feature>
<feature type="domain" description="MGS-like" evidence="2">
    <location>
        <begin position="1"/>
        <end position="148"/>
    </location>
</feature>
<keyword id="KW-0378">Hydrolase</keyword>
<keyword id="KW-0511">Multifunctional enzyme</keyword>
<keyword id="KW-0658">Purine biosynthesis</keyword>
<keyword id="KW-0808">Transferase</keyword>
<dbReference type="EC" id="2.1.2.3" evidence="1"/>
<dbReference type="EC" id="3.5.4.10" evidence="1"/>
<dbReference type="EMBL" id="CP001113">
    <property type="protein sequence ID" value="ACF63258.1"/>
    <property type="molecule type" value="Genomic_DNA"/>
</dbReference>
<dbReference type="RefSeq" id="WP_001187513.1">
    <property type="nucleotide sequence ID" value="NZ_CCMR01000001.1"/>
</dbReference>
<dbReference type="SMR" id="B4T108"/>
<dbReference type="KEGG" id="see:SNSL254_A4509"/>
<dbReference type="HOGENOM" id="CLU_016316_5_2_6"/>
<dbReference type="UniPathway" id="UPA00074">
    <property type="reaction ID" value="UER00133"/>
</dbReference>
<dbReference type="UniPathway" id="UPA00074">
    <property type="reaction ID" value="UER00135"/>
</dbReference>
<dbReference type="Proteomes" id="UP000008824">
    <property type="component" value="Chromosome"/>
</dbReference>
<dbReference type="GO" id="GO:0005829">
    <property type="term" value="C:cytosol"/>
    <property type="evidence" value="ECO:0007669"/>
    <property type="project" value="TreeGrafter"/>
</dbReference>
<dbReference type="GO" id="GO:0003937">
    <property type="term" value="F:IMP cyclohydrolase activity"/>
    <property type="evidence" value="ECO:0007669"/>
    <property type="project" value="UniProtKB-UniRule"/>
</dbReference>
<dbReference type="GO" id="GO:0004643">
    <property type="term" value="F:phosphoribosylaminoimidazolecarboxamide formyltransferase activity"/>
    <property type="evidence" value="ECO:0007669"/>
    <property type="project" value="UniProtKB-UniRule"/>
</dbReference>
<dbReference type="GO" id="GO:0006189">
    <property type="term" value="P:'de novo' IMP biosynthetic process"/>
    <property type="evidence" value="ECO:0007669"/>
    <property type="project" value="UniProtKB-UniRule"/>
</dbReference>
<dbReference type="CDD" id="cd01421">
    <property type="entry name" value="IMPCH"/>
    <property type="match status" value="1"/>
</dbReference>
<dbReference type="FunFam" id="3.40.140.20:FF:000001">
    <property type="entry name" value="Bifunctional purine biosynthesis protein PurH"/>
    <property type="match status" value="1"/>
</dbReference>
<dbReference type="FunFam" id="3.40.140.20:FF:000002">
    <property type="entry name" value="Bifunctional purine biosynthesis protein PurH"/>
    <property type="match status" value="1"/>
</dbReference>
<dbReference type="FunFam" id="3.40.50.1380:FF:000001">
    <property type="entry name" value="Bifunctional purine biosynthesis protein PurH"/>
    <property type="match status" value="1"/>
</dbReference>
<dbReference type="Gene3D" id="3.40.140.20">
    <property type="match status" value="2"/>
</dbReference>
<dbReference type="Gene3D" id="3.40.50.1380">
    <property type="entry name" value="Methylglyoxal synthase-like domain"/>
    <property type="match status" value="1"/>
</dbReference>
<dbReference type="HAMAP" id="MF_00139">
    <property type="entry name" value="PurH"/>
    <property type="match status" value="1"/>
</dbReference>
<dbReference type="InterPro" id="IPR024051">
    <property type="entry name" value="AICAR_Tfase_dup_dom_sf"/>
</dbReference>
<dbReference type="InterPro" id="IPR016193">
    <property type="entry name" value="Cytidine_deaminase-like"/>
</dbReference>
<dbReference type="InterPro" id="IPR011607">
    <property type="entry name" value="MGS-like_dom"/>
</dbReference>
<dbReference type="InterPro" id="IPR036914">
    <property type="entry name" value="MGS-like_dom_sf"/>
</dbReference>
<dbReference type="InterPro" id="IPR002695">
    <property type="entry name" value="PurH-like"/>
</dbReference>
<dbReference type="NCBIfam" id="NF002049">
    <property type="entry name" value="PRK00881.1"/>
    <property type="match status" value="1"/>
</dbReference>
<dbReference type="NCBIfam" id="TIGR00355">
    <property type="entry name" value="purH"/>
    <property type="match status" value="1"/>
</dbReference>
<dbReference type="PANTHER" id="PTHR11692:SF0">
    <property type="entry name" value="BIFUNCTIONAL PURINE BIOSYNTHESIS PROTEIN ATIC"/>
    <property type="match status" value="1"/>
</dbReference>
<dbReference type="PANTHER" id="PTHR11692">
    <property type="entry name" value="BIFUNCTIONAL PURINE BIOSYNTHESIS PROTEIN PURH"/>
    <property type="match status" value="1"/>
</dbReference>
<dbReference type="Pfam" id="PF01808">
    <property type="entry name" value="AICARFT_IMPCHas"/>
    <property type="match status" value="1"/>
</dbReference>
<dbReference type="Pfam" id="PF02142">
    <property type="entry name" value="MGS"/>
    <property type="match status" value="1"/>
</dbReference>
<dbReference type="PIRSF" id="PIRSF000414">
    <property type="entry name" value="AICARFT_IMPCHas"/>
    <property type="match status" value="1"/>
</dbReference>
<dbReference type="SMART" id="SM00798">
    <property type="entry name" value="AICARFT_IMPCHas"/>
    <property type="match status" value="1"/>
</dbReference>
<dbReference type="SMART" id="SM00851">
    <property type="entry name" value="MGS"/>
    <property type="match status" value="1"/>
</dbReference>
<dbReference type="SUPFAM" id="SSF53927">
    <property type="entry name" value="Cytidine deaminase-like"/>
    <property type="match status" value="1"/>
</dbReference>
<dbReference type="SUPFAM" id="SSF52335">
    <property type="entry name" value="Methylglyoxal synthase-like"/>
    <property type="match status" value="1"/>
</dbReference>
<dbReference type="PROSITE" id="PS51855">
    <property type="entry name" value="MGS"/>
    <property type="match status" value="1"/>
</dbReference>
<organism>
    <name type="scientific">Salmonella newport (strain SL254)</name>
    <dbReference type="NCBI Taxonomy" id="423368"/>
    <lineage>
        <taxon>Bacteria</taxon>
        <taxon>Pseudomonadati</taxon>
        <taxon>Pseudomonadota</taxon>
        <taxon>Gammaproteobacteria</taxon>
        <taxon>Enterobacterales</taxon>
        <taxon>Enterobacteriaceae</taxon>
        <taxon>Salmonella</taxon>
    </lineage>
</organism>
<accession>B4T108</accession>
<gene>
    <name evidence="1" type="primary">purH</name>
    <name type="ordered locus">SNSL254_A4509</name>
</gene>
<protein>
    <recommendedName>
        <fullName evidence="1">Bifunctional purine biosynthesis protein PurH</fullName>
    </recommendedName>
    <domain>
        <recommendedName>
            <fullName evidence="1">Phosphoribosylaminoimidazolecarboxamide formyltransferase</fullName>
            <ecNumber evidence="1">2.1.2.3</ecNumber>
        </recommendedName>
        <alternativeName>
            <fullName evidence="1">AICAR transformylase</fullName>
        </alternativeName>
    </domain>
    <domain>
        <recommendedName>
            <fullName evidence="1">IMP cyclohydrolase</fullName>
            <ecNumber evidence="1">3.5.4.10</ecNumber>
        </recommendedName>
        <alternativeName>
            <fullName evidence="1">ATIC</fullName>
        </alternativeName>
        <alternativeName>
            <fullName evidence="1">IMP synthase</fullName>
        </alternativeName>
        <alternativeName>
            <fullName evidence="1">Inosinicase</fullName>
        </alternativeName>
    </domain>
</protein>